<feature type="chain" id="PRO_0000149627" description="Non-structural glycoprotein 4">
    <location>
        <begin position="1"/>
        <end position="175"/>
    </location>
</feature>
<feature type="topological domain" description="Lumenal" evidence="1">
    <location>
        <begin position="1"/>
        <end position="28"/>
    </location>
</feature>
<feature type="transmembrane region" description="Helical; Signal-anchor for type III membrane protein" evidence="1">
    <location>
        <begin position="29"/>
        <end position="51"/>
    </location>
</feature>
<feature type="topological domain" description="Cytoplasmic" evidence="1">
    <location>
        <begin position="52"/>
        <end position="175"/>
    </location>
</feature>
<feature type="binding site" evidence="1">
    <location>
        <position position="120"/>
    </location>
    <ligand>
        <name>Ca(2+)</name>
        <dbReference type="ChEBI" id="CHEBI:29108"/>
    </ligand>
</feature>
<feature type="binding site" evidence="1">
    <location>
        <position position="123"/>
    </location>
    <ligand>
        <name>Ca(2+)</name>
        <dbReference type="ChEBI" id="CHEBI:29108"/>
    </ligand>
</feature>
<feature type="glycosylation site" description="N-linked (GlcNAc...) asparagine; by host" evidence="1">
    <location>
        <position position="8"/>
    </location>
</feature>
<feature type="glycosylation site" description="N-linked (GlcNAc...) asparagine; by host" evidence="1">
    <location>
        <position position="18"/>
    </location>
</feature>
<feature type="sequence variant" description="In strain: Wa-attenuated.">
    <original>V</original>
    <variation>A</variation>
    <location>
        <position position="13"/>
    </location>
</feature>
<feature type="sequence variant" description="In strain: Wa-virulent and Isolate clinical N.N.6932.">
    <original>S</original>
    <variation>L</variation>
    <location>
        <position position="16"/>
    </location>
</feature>
<feature type="sequence variant" description="In strain: Wa-virulent and Isolate clinical N.N.6932.">
    <original>L</original>
    <variation>P</variation>
    <location>
        <position position="34"/>
    </location>
</feature>
<feature type="sequence variant">
    <original>Q</original>
    <variation>R</variation>
    <location>
        <position position="97"/>
    </location>
</feature>
<reference key="1">
    <citation type="journal article" date="1984" name="J. Virol.">
        <title>Nucleotide sequence of human rotavirus genome segment 10, an RNA encoding a glycosylated virus protein.</title>
        <authorList>
            <person name="Okada Y."/>
            <person name="Richardson M.A."/>
            <person name="Ikegami N."/>
            <person name="Nomoto A."/>
            <person name="Furuichi Y."/>
        </authorList>
    </citation>
    <scope>NUCLEOTIDE SEQUENCE [GENOMIC RNA]</scope>
</reference>
<reference key="2">
    <citation type="journal article" date="1999" name="Virus Genes">
        <title>Comparisons of nucleotide and deduced amino acid sequences of NSP4 genes of virulent and attenuated pairs of group A and C rotaviruses.</title>
        <authorList>
            <person name="Chang K.O."/>
            <person name="Kim Y.J."/>
            <person name="Saif L.J."/>
        </authorList>
    </citation>
    <scope>NUCLEOTIDE SEQUENCE [MRNA]</scope>
    <source>
        <strain>Wa-attenuated</strain>
        <strain>Wa-virulent</strain>
    </source>
</reference>
<reference key="3">
    <citation type="journal article" date="2000" name="Arch. Virol.">
        <title>Comparative sequence analysis identified mutations outside the NSP4 cytotoxic domain of tissue culture-adapted ATCC-Wa strain of human rotavirus and a novel inter-species variable domain in its C-terminus.</title>
        <authorList>
            <person name="Mohan K.V.K."/>
            <person name="Atreya C.D."/>
        </authorList>
    </citation>
    <scope>NUCLEOTIDE SEQUENCE [MRNA]</scope>
</reference>
<reference key="4">
    <citation type="submission" date="2005-10" db="EMBL/GenBank/DDBJ databases">
        <title>Sequence analysis of the Rotavirus NSP4 gene isolated in Nizhny Novgorod, Russia.</title>
        <authorList>
            <person name="Novikov D.V."/>
            <person name="Ponomareva N.V."/>
            <person name="Epifanova N.V."/>
            <person name="Fedorova O.F."/>
            <person name="Novikova N.A."/>
        </authorList>
    </citation>
    <scope>NUCLEOTIDE SEQUENCE [GENOMIC RNA]</scope>
    <source>
        <strain>Isolate clinical N.N.6932</strain>
    </source>
</reference>
<proteinExistence type="evidence at transcript level"/>
<protein>
    <recommendedName>
        <fullName evidence="1">Non-structural glycoprotein 4</fullName>
        <shortName evidence="1">NSP4</shortName>
    </recommendedName>
    <alternativeName>
        <fullName evidence="1">NCVP5</fullName>
    </alternativeName>
    <alternativeName>
        <fullName evidence="1">NS28</fullName>
    </alternativeName>
</protein>
<accession>P03535</accession>
<accession>Q71TX1</accession>
<accession>Q77UT4</accession>
<accession>Q9J4U6</accession>
<accession>Q9YS20</accession>
<dbReference type="EMBL" id="K02032">
    <property type="protein sequence ID" value="AAA47309.1"/>
    <property type="molecule type" value="Genomic_RNA"/>
</dbReference>
<dbReference type="EMBL" id="AF093199">
    <property type="protein sequence ID" value="AAC83708.1"/>
    <property type="molecule type" value="mRNA"/>
</dbReference>
<dbReference type="EMBL" id="AF093200">
    <property type="protein sequence ID" value="AAC83709.1"/>
    <property type="molecule type" value="mRNA"/>
</dbReference>
<dbReference type="EMBL" id="AF200224">
    <property type="protein sequence ID" value="AAF37205.1"/>
    <property type="molecule type" value="mRNA"/>
</dbReference>
<dbReference type="EMBL" id="AF200225">
    <property type="protein sequence ID" value="AAF37206.1"/>
    <property type="molecule type" value="mRNA"/>
</dbReference>
<dbReference type="EMBL" id="DQ270108">
    <property type="protein sequence ID" value="ABB92472.1"/>
    <property type="molecule type" value="Genomic_RNA"/>
</dbReference>
<dbReference type="PIR" id="A04139">
    <property type="entry name" value="VGXRNH"/>
</dbReference>
<dbReference type="Proteomes" id="UP000006581">
    <property type="component" value="Genome"/>
</dbReference>
<dbReference type="GO" id="GO:0005576">
    <property type="term" value="C:extracellular region"/>
    <property type="evidence" value="ECO:0007669"/>
    <property type="project" value="UniProtKB-SubCell"/>
</dbReference>
<dbReference type="GO" id="GO:0044155">
    <property type="term" value="C:host caveola"/>
    <property type="evidence" value="ECO:0007669"/>
    <property type="project" value="UniProtKB-SubCell"/>
</dbReference>
<dbReference type="GO" id="GO:0044169">
    <property type="term" value="C:host cell rough endoplasmic reticulum membrane"/>
    <property type="evidence" value="ECO:0007669"/>
    <property type="project" value="UniProtKB-SubCell"/>
</dbReference>
<dbReference type="GO" id="GO:0016020">
    <property type="term" value="C:membrane"/>
    <property type="evidence" value="ECO:0007669"/>
    <property type="project" value="UniProtKB-UniRule"/>
</dbReference>
<dbReference type="GO" id="GO:0015267">
    <property type="term" value="F:channel activity"/>
    <property type="evidence" value="ECO:0007669"/>
    <property type="project" value="UniProtKB-KW"/>
</dbReference>
<dbReference type="GO" id="GO:0046872">
    <property type="term" value="F:metal ion binding"/>
    <property type="evidence" value="ECO:0007669"/>
    <property type="project" value="UniProtKB-UniRule"/>
</dbReference>
<dbReference type="GO" id="GO:0090729">
    <property type="term" value="F:toxin activity"/>
    <property type="evidence" value="ECO:0007669"/>
    <property type="project" value="UniProtKB-UniRule"/>
</dbReference>
<dbReference type="GO" id="GO:0034220">
    <property type="term" value="P:monoatomic ion transmembrane transport"/>
    <property type="evidence" value="ECO:0007669"/>
    <property type="project" value="UniProtKB-KW"/>
</dbReference>
<dbReference type="GO" id="GO:0039520">
    <property type="term" value="P:symbiont-mediated activation of host autophagy"/>
    <property type="evidence" value="ECO:0007669"/>
    <property type="project" value="UniProtKB-KW"/>
</dbReference>
<dbReference type="GO" id="GO:0016032">
    <property type="term" value="P:viral process"/>
    <property type="evidence" value="ECO:0007669"/>
    <property type="project" value="UniProtKB-UniRule"/>
</dbReference>
<dbReference type="Gene3D" id="1.20.5.430">
    <property type="match status" value="1"/>
</dbReference>
<dbReference type="HAMAP" id="MF_04091">
    <property type="entry name" value="ROTA_NSP4"/>
    <property type="match status" value="1"/>
</dbReference>
<dbReference type="InterPro" id="IPR002107">
    <property type="entry name" value="Rotavirus_NSP4"/>
</dbReference>
<dbReference type="Pfam" id="PF01452">
    <property type="entry name" value="Rota_NSP4"/>
    <property type="match status" value="1"/>
</dbReference>
<dbReference type="SUPFAM" id="SSF58030">
    <property type="entry name" value="Rotavirus nonstructural proteins"/>
    <property type="match status" value="1"/>
</dbReference>
<keyword id="KW-1072">Activation of host autophagy by virus</keyword>
<keyword id="KW-0106">Calcium</keyword>
<keyword id="KW-0260">Enterotoxin</keyword>
<keyword id="KW-0325">Glycoprotein</keyword>
<keyword id="KW-1038">Host endoplasmic reticulum</keyword>
<keyword id="KW-1043">Host membrane</keyword>
<keyword id="KW-0945">Host-virus interaction</keyword>
<keyword id="KW-0407">Ion channel</keyword>
<keyword id="KW-0406">Ion transport</keyword>
<keyword id="KW-0472">Membrane</keyword>
<keyword id="KW-0479">Metal-binding</keyword>
<keyword id="KW-0964">Secreted</keyword>
<keyword id="KW-0735">Signal-anchor</keyword>
<keyword id="KW-0800">Toxin</keyword>
<keyword id="KW-0812">Transmembrane</keyword>
<keyword id="KW-1133">Transmembrane helix</keyword>
<keyword id="KW-0813">Transport</keyword>
<keyword id="KW-1182">Viral ion channel</keyword>
<keyword id="KW-0843">Virulence</keyword>
<comment type="function">
    <text evidence="1">Plays an essential role in the virus replication cycle by acting as a viroporin. Creates a pore in the host endoplasmic reticulum and as a consequence releases Ca(2+) in the cytoplasm of infected cell. In turn, high levels of cytoplasmic calcium trigger membrane trafficking and transport of viral ER-associated proteins to viroplasms, sites of viral genome replication and immature particle assembly.</text>
</comment>
<comment type="function">
    <text evidence="1">The secreted form acts as an enterotoxin that causes phospholipase C-dependent elevation of the intracellular calcium concentration in host intestinal mucosa cells. Increased concentration of intracellular calcium disrupts the cytoskeleton and the tight junctions, raising the paracellular permeability. Potentiates chloride ion secretion through a calcium ion-dependent signaling pathway, inducing age-dependent diarrhea. To perform this enterotoxigenic role in vivo, NSP4 is released from infected enterocytes in a soluble form capable of diffusing within the intestinal lumen and interacting with host plasma membrane receptors on neighboring epithelial cells such as integrins ITGA1/ITGB1 and ITGA2/ITGB1.</text>
</comment>
<comment type="subunit">
    <text evidence="1">Homotetramer. Interacts with the immature particle in the viroplasm. Interacts with host CAV1, early and late in infection. Interacts with host integrin ITGA1/ITGB1 heterodimer. Interacts with host integrin ITGA2/ITGB1 heterodimer. Interaction with microtubules blocks trafficking to the Golgi apparatus.</text>
</comment>
<comment type="subcellular location">
    <subcellularLocation>
        <location evidence="1">Host rough endoplasmic reticulum membrane</location>
        <topology evidence="1">Single-pass type III membrane protein</topology>
    </subcellularLocation>
    <subcellularLocation>
        <location evidence="1">Host membrane</location>
        <location evidence="1">Host caveola</location>
        <topology evidence="1">Single-pass type III membrane protein</topology>
    </subcellularLocation>
    <subcellularLocation>
        <location evidence="1">Secreted</location>
    </subcellularLocation>
    <text evidence="1">NSP4 also localizes in vesicular structures which contain autophagosomal markers and associate with viroplasms in virus-infected cells. Additionally, a soluble form of glycosylated NSP4 is secreted despite retention of its transmembrane domain.</text>
</comment>
<comment type="domain">
    <text evidence="1">Binds 1 calcium ion per tetramer.</text>
</comment>
<comment type="PTM">
    <text evidence="1">The N-glycosyl content is primarily Man(9)GlcNAc, with a small amount of Man(8)GlcNAc.</text>
</comment>
<comment type="similarity">
    <text evidence="1">Belongs to the rotavirus NSP4 family.</text>
</comment>
<organism>
    <name type="scientific">Rotavirus A (strain RVA/Human/United States/Wa/1974/G1P1A[8])</name>
    <name type="common">RV-A</name>
    <dbReference type="NCBI Taxonomy" id="10962"/>
    <lineage>
        <taxon>Viruses</taxon>
        <taxon>Riboviria</taxon>
        <taxon>Orthornavirae</taxon>
        <taxon>Duplornaviricota</taxon>
        <taxon>Resentoviricetes</taxon>
        <taxon>Reovirales</taxon>
        <taxon>Sedoreoviridae</taxon>
        <taxon>Rotavirus</taxon>
        <taxon>Rotavirus A</taxon>
    </lineage>
</organism>
<name>NSP4_ROTHW</name>
<evidence type="ECO:0000255" key="1">
    <source>
        <dbReference type="HAMAP-Rule" id="MF_04091"/>
    </source>
</evidence>
<organismHost>
    <name type="scientific">Homo sapiens</name>
    <name type="common">Human</name>
    <dbReference type="NCBI Taxonomy" id="9606"/>
</organismHost>
<sequence length="175" mass="20237">MDKLADLNYTLSVITSMNDTLHSIIQDPGMAYFLYIASVLTVLFTLHKASIPTMKIALKTSKCSYKVIKYCIVTIINTLLKLAGYKEQVTTKDEIEQQMDRIVKEMRRQLEMIDKLTTREIEQVELLKRIHDNLITRPVDVIDMSKEFNQKNIKTLDEWESGKNPYEPSEVTASM</sequence>